<reference key="1">
    <citation type="journal article" date="2000" name="Nature">
        <title>Sequence and analysis of chromosome 1 of the plant Arabidopsis thaliana.</title>
        <authorList>
            <person name="Theologis A."/>
            <person name="Ecker J.R."/>
            <person name="Palm C.J."/>
            <person name="Federspiel N.A."/>
            <person name="Kaul S."/>
            <person name="White O."/>
            <person name="Alonso J."/>
            <person name="Altafi H."/>
            <person name="Araujo R."/>
            <person name="Bowman C.L."/>
            <person name="Brooks S.Y."/>
            <person name="Buehler E."/>
            <person name="Chan A."/>
            <person name="Chao Q."/>
            <person name="Chen H."/>
            <person name="Cheuk R.F."/>
            <person name="Chin C.W."/>
            <person name="Chung M.K."/>
            <person name="Conn L."/>
            <person name="Conway A.B."/>
            <person name="Conway A.R."/>
            <person name="Creasy T.H."/>
            <person name="Dewar K."/>
            <person name="Dunn P."/>
            <person name="Etgu P."/>
            <person name="Feldblyum T.V."/>
            <person name="Feng J.-D."/>
            <person name="Fong B."/>
            <person name="Fujii C.Y."/>
            <person name="Gill J.E."/>
            <person name="Goldsmith A.D."/>
            <person name="Haas B."/>
            <person name="Hansen N.F."/>
            <person name="Hughes B."/>
            <person name="Huizar L."/>
            <person name="Hunter J.L."/>
            <person name="Jenkins J."/>
            <person name="Johnson-Hopson C."/>
            <person name="Khan S."/>
            <person name="Khaykin E."/>
            <person name="Kim C.J."/>
            <person name="Koo H.L."/>
            <person name="Kremenetskaia I."/>
            <person name="Kurtz D.B."/>
            <person name="Kwan A."/>
            <person name="Lam B."/>
            <person name="Langin-Hooper S."/>
            <person name="Lee A."/>
            <person name="Lee J.M."/>
            <person name="Lenz C.A."/>
            <person name="Li J.H."/>
            <person name="Li Y.-P."/>
            <person name="Lin X."/>
            <person name="Liu S.X."/>
            <person name="Liu Z.A."/>
            <person name="Luros J.S."/>
            <person name="Maiti R."/>
            <person name="Marziali A."/>
            <person name="Militscher J."/>
            <person name="Miranda M."/>
            <person name="Nguyen M."/>
            <person name="Nierman W.C."/>
            <person name="Osborne B.I."/>
            <person name="Pai G."/>
            <person name="Peterson J."/>
            <person name="Pham P.K."/>
            <person name="Rizzo M."/>
            <person name="Rooney T."/>
            <person name="Rowley D."/>
            <person name="Sakano H."/>
            <person name="Salzberg S.L."/>
            <person name="Schwartz J.R."/>
            <person name="Shinn P."/>
            <person name="Southwick A.M."/>
            <person name="Sun H."/>
            <person name="Tallon L.J."/>
            <person name="Tambunga G."/>
            <person name="Toriumi M.J."/>
            <person name="Town C.D."/>
            <person name="Utterback T."/>
            <person name="Van Aken S."/>
            <person name="Vaysberg M."/>
            <person name="Vysotskaia V.S."/>
            <person name="Walker M."/>
            <person name="Wu D."/>
            <person name="Yu G."/>
            <person name="Fraser C.M."/>
            <person name="Venter J.C."/>
            <person name="Davis R.W."/>
        </authorList>
    </citation>
    <scope>NUCLEOTIDE SEQUENCE [LARGE SCALE GENOMIC DNA]</scope>
    <source>
        <strain>cv. Columbia</strain>
    </source>
</reference>
<reference key="2">
    <citation type="journal article" date="2017" name="Plant J.">
        <title>Araport11: a complete reannotation of the Arabidopsis thaliana reference genome.</title>
        <authorList>
            <person name="Cheng C.Y."/>
            <person name="Krishnakumar V."/>
            <person name="Chan A.P."/>
            <person name="Thibaud-Nissen F."/>
            <person name="Schobel S."/>
            <person name="Town C.D."/>
        </authorList>
    </citation>
    <scope>GENOME REANNOTATION</scope>
    <source>
        <strain>cv. Columbia</strain>
    </source>
</reference>
<reference key="3">
    <citation type="journal article" date="2002" name="Science">
        <title>Functional annotation of a full-length Arabidopsis cDNA collection.</title>
        <authorList>
            <person name="Seki M."/>
            <person name="Narusaka M."/>
            <person name="Kamiya A."/>
            <person name="Ishida J."/>
            <person name="Satou M."/>
            <person name="Sakurai T."/>
            <person name="Nakajima M."/>
            <person name="Enju A."/>
            <person name="Akiyama K."/>
            <person name="Oono Y."/>
            <person name="Muramatsu M."/>
            <person name="Hayashizaki Y."/>
            <person name="Kawai J."/>
            <person name="Carninci P."/>
            <person name="Itoh M."/>
            <person name="Ishii Y."/>
            <person name="Arakawa T."/>
            <person name="Shibata K."/>
            <person name="Shinagawa A."/>
            <person name="Shinozaki K."/>
        </authorList>
    </citation>
    <scope>NUCLEOTIDE SEQUENCE [LARGE SCALE MRNA] (ISOFORM 2)</scope>
    <source>
        <strain>cv. Columbia</strain>
    </source>
</reference>
<reference key="4">
    <citation type="submission" date="2002-03" db="EMBL/GenBank/DDBJ databases">
        <title>Full-length cDNA from Arabidopsis thaliana.</title>
        <authorList>
            <person name="Brover V.V."/>
            <person name="Troukhan M.E."/>
            <person name="Alexandrov N.A."/>
            <person name="Lu Y.-P."/>
            <person name="Flavell R.B."/>
            <person name="Feldmann K.A."/>
        </authorList>
    </citation>
    <scope>NUCLEOTIDE SEQUENCE [LARGE SCALE MRNA] (ISOFORM 2)</scope>
</reference>
<reference key="5">
    <citation type="journal article" date="2003" name="Science">
        <title>Empirical analysis of transcriptional activity in the Arabidopsis genome.</title>
        <authorList>
            <person name="Yamada K."/>
            <person name="Lim J."/>
            <person name="Dale J.M."/>
            <person name="Chen H."/>
            <person name="Shinn P."/>
            <person name="Palm C.J."/>
            <person name="Southwick A.M."/>
            <person name="Wu H.C."/>
            <person name="Kim C.J."/>
            <person name="Nguyen M."/>
            <person name="Pham P.K."/>
            <person name="Cheuk R.F."/>
            <person name="Karlin-Newmann G."/>
            <person name="Liu S.X."/>
            <person name="Lam B."/>
            <person name="Sakano H."/>
            <person name="Wu T."/>
            <person name="Yu G."/>
            <person name="Miranda M."/>
            <person name="Quach H.L."/>
            <person name="Tripp M."/>
            <person name="Chang C.H."/>
            <person name="Lee J.M."/>
            <person name="Toriumi M.J."/>
            <person name="Chan M.M."/>
            <person name="Tang C.C."/>
            <person name="Onodera C.S."/>
            <person name="Deng J.M."/>
            <person name="Akiyama K."/>
            <person name="Ansari Y."/>
            <person name="Arakawa T."/>
            <person name="Banh J."/>
            <person name="Banno F."/>
            <person name="Bowser L."/>
            <person name="Brooks S.Y."/>
            <person name="Carninci P."/>
            <person name="Chao Q."/>
            <person name="Choy N."/>
            <person name="Enju A."/>
            <person name="Goldsmith A.D."/>
            <person name="Gurjal M."/>
            <person name="Hansen N.F."/>
            <person name="Hayashizaki Y."/>
            <person name="Johnson-Hopson C."/>
            <person name="Hsuan V.W."/>
            <person name="Iida K."/>
            <person name="Karnes M."/>
            <person name="Khan S."/>
            <person name="Koesema E."/>
            <person name="Ishida J."/>
            <person name="Jiang P.X."/>
            <person name="Jones T."/>
            <person name="Kawai J."/>
            <person name="Kamiya A."/>
            <person name="Meyers C."/>
            <person name="Nakajima M."/>
            <person name="Narusaka M."/>
            <person name="Seki M."/>
            <person name="Sakurai T."/>
            <person name="Satou M."/>
            <person name="Tamse R."/>
            <person name="Vaysberg M."/>
            <person name="Wallender E.K."/>
            <person name="Wong C."/>
            <person name="Yamamura Y."/>
            <person name="Yuan S."/>
            <person name="Shinozaki K."/>
            <person name="Davis R.W."/>
            <person name="Theologis A."/>
            <person name="Ecker J.R."/>
        </authorList>
    </citation>
    <scope>NUCLEOTIDE SEQUENCE [LARGE SCALE MRNA] OF 1-227 (ISOFORM 2)</scope>
    <source>
        <strain>cv. Columbia</strain>
    </source>
</reference>
<reference key="6">
    <citation type="journal article" date="2006" name="Plant Cell">
        <title>Arabidopsis NRP1 and NRP2 encode histone chaperones and are required for maintaining postembryonic root growth.</title>
        <authorList>
            <person name="Zhu Y."/>
            <person name="Dong A."/>
            <person name="Meyer D."/>
            <person name="Pichon O."/>
            <person name="Renou J.P."/>
            <person name="Cao K."/>
            <person name="Shen W.H."/>
        </authorList>
    </citation>
    <scope>DISRUPTION PHENOTYPE</scope>
    <scope>FUNCTION</scope>
    <scope>TISSUE SPECIFICITY</scope>
    <scope>SUBCELLULAR LOCATION</scope>
    <scope>SUBUNIT</scope>
</reference>
<reference key="7">
    <citation type="journal article" date="2007" name="Plant Signal. Behav.">
        <title>Chromatin remodeling in Arabidopsis root growth.</title>
        <authorList>
            <person name="Zhu Y."/>
            <person name="Dong A."/>
            <person name="Shen W.H."/>
        </authorList>
    </citation>
    <scope>FUNCTION</scope>
</reference>
<reference key="8">
    <citation type="journal article" date="2012" name="Plant Cell">
        <title>NAP1 family histone chaperones are required for somatic homologous recombination in Arabidopsis.</title>
        <authorList>
            <person name="Gao J."/>
            <person name="Zhu Y."/>
            <person name="Zhou W."/>
            <person name="Molinier J."/>
            <person name="Dong A."/>
            <person name="Shen W.H."/>
        </authorList>
    </citation>
    <scope>DISRUPTION PHENOTYPE</scope>
    <scope>FUNCTION</scope>
</reference>
<reference key="9">
    <citation type="journal article" date="2019" name="Molecules">
        <title>Structural characterization of Arabidopsis thaliana NAP1-Related Protein 2 (AtNRP2) and Comparison with its homolog AtNRP1.</title>
        <authorList>
            <person name="Kumar A."/>
            <person name="Kumar Singh A."/>
            <person name="Chandrakant Bobde R."/>
            <person name="Vasudevan D."/>
        </authorList>
    </citation>
    <scope>X-RAY CRYSTALLOGRAPHY (3.42 ANGSTROMS) OF 14-222</scope>
    <scope>SUBUNIT</scope>
</reference>
<protein>
    <recommendedName>
        <fullName>NAP1-related protein 2</fullName>
    </recommendedName>
    <alternativeName>
        <fullName>Nucleosome/chromatin assembly factor group A5</fullName>
    </alternativeName>
    <alternativeName>
        <fullName>Protein SET homolog 2</fullName>
    </alternativeName>
</protein>
<accession>Q8LC68</accession>
<accession>Q8GXV1</accession>
<accession>Q9M9V0</accession>
<feature type="chain" id="PRO_0000423703" description="NAP1-related protein 2">
    <location>
        <begin position="1"/>
        <end position="255"/>
    </location>
</feature>
<feature type="region of interest" description="Disordered" evidence="2">
    <location>
        <begin position="213"/>
        <end position="255"/>
    </location>
</feature>
<feature type="coiled-coil region" evidence="1">
    <location>
        <begin position="19"/>
        <end position="60"/>
    </location>
</feature>
<feature type="compositionally biased region" description="Acidic residues" evidence="2">
    <location>
        <begin position="221"/>
        <end position="255"/>
    </location>
</feature>
<feature type="splice variant" id="VSP_053258" description="In isoform 2." evidence="7 8 9">
    <original>E</original>
    <variation>EQ</variation>
    <location>
        <position position="201"/>
    </location>
</feature>
<feature type="helix" evidence="13">
    <location>
        <begin position="26"/>
        <end position="72"/>
    </location>
</feature>
<feature type="helix" evidence="13">
    <location>
        <begin position="76"/>
        <end position="83"/>
    </location>
</feature>
<feature type="helix" evidence="13">
    <location>
        <begin position="85"/>
        <end position="89"/>
    </location>
</feature>
<feature type="helix" evidence="13">
    <location>
        <begin position="93"/>
        <end position="99"/>
    </location>
</feature>
<feature type="strand" evidence="13">
    <location>
        <begin position="102"/>
        <end position="109"/>
    </location>
</feature>
<feature type="strand" evidence="13">
    <location>
        <begin position="115"/>
        <end position="123"/>
    </location>
</feature>
<feature type="strand" evidence="13">
    <location>
        <begin position="132"/>
        <end position="140"/>
    </location>
</feature>
<feature type="strand" evidence="13">
    <location>
        <begin position="146"/>
        <end position="150"/>
    </location>
</feature>
<feature type="helix" evidence="13">
    <location>
        <begin position="202"/>
        <end position="208"/>
    </location>
</feature>
<feature type="turn" evidence="13">
    <location>
        <begin position="209"/>
        <end position="212"/>
    </location>
</feature>
<feature type="helix" evidence="13">
    <location>
        <begin position="215"/>
        <end position="218"/>
    </location>
</feature>
<evidence type="ECO:0000255" key="1"/>
<evidence type="ECO:0000256" key="2">
    <source>
        <dbReference type="SAM" id="MobiDB-lite"/>
    </source>
</evidence>
<evidence type="ECO:0000269" key="3">
    <source>
    </source>
</evidence>
<evidence type="ECO:0000269" key="4">
    <source>
    </source>
</evidence>
<evidence type="ECO:0000269" key="5">
    <source>
    </source>
</evidence>
<evidence type="ECO:0000269" key="6">
    <source>
    </source>
</evidence>
<evidence type="ECO:0000303" key="7">
    <source>
    </source>
</evidence>
<evidence type="ECO:0000303" key="8">
    <source>
    </source>
</evidence>
<evidence type="ECO:0000303" key="9">
    <source ref="4"/>
</evidence>
<evidence type="ECO:0000305" key="10"/>
<evidence type="ECO:0000305" key="11">
    <source>
    </source>
</evidence>
<evidence type="ECO:0000305" key="12">
    <source>
    </source>
</evidence>
<evidence type="ECO:0007829" key="13">
    <source>
        <dbReference type="PDB" id="6JQV"/>
    </source>
</evidence>
<dbReference type="EMBL" id="AC011809">
    <property type="protein sequence ID" value="AAF27100.1"/>
    <property type="molecule type" value="Genomic_DNA"/>
</dbReference>
<dbReference type="EMBL" id="CP002684">
    <property type="protein sequence ID" value="AEE29765.1"/>
    <property type="molecule type" value="Genomic_DNA"/>
</dbReference>
<dbReference type="EMBL" id="AK118024">
    <property type="protein sequence ID" value="BAC42657.1"/>
    <property type="status" value="ALT_FRAME"/>
    <property type="molecule type" value="mRNA"/>
</dbReference>
<dbReference type="EMBL" id="AY086761">
    <property type="protein sequence ID" value="AAM63812.1"/>
    <property type="molecule type" value="mRNA"/>
</dbReference>
<dbReference type="EMBL" id="BT005248">
    <property type="protein sequence ID" value="AAO63312.1"/>
    <property type="status" value="ALT_FRAME"/>
    <property type="molecule type" value="mRNA"/>
</dbReference>
<dbReference type="PIR" id="H86321">
    <property type="entry name" value="H86321"/>
</dbReference>
<dbReference type="RefSeq" id="NP_564063.1">
    <molecule id="Q8LC68-2"/>
    <property type="nucleotide sequence ID" value="NM_101738.3"/>
</dbReference>
<dbReference type="PDB" id="6JQV">
    <property type="method" value="X-ray"/>
    <property type="resolution" value="3.42 A"/>
    <property type="chains" value="A/B=14-222"/>
</dbReference>
<dbReference type="PDBsum" id="6JQV"/>
<dbReference type="SMR" id="Q8LC68"/>
<dbReference type="BioGRID" id="23701">
    <property type="interactions" value="8"/>
</dbReference>
<dbReference type="FunCoup" id="Q8LC68">
    <property type="interactions" value="4230"/>
</dbReference>
<dbReference type="IntAct" id="Q8LC68">
    <property type="interactions" value="2"/>
</dbReference>
<dbReference type="STRING" id="3702.Q8LC68"/>
<dbReference type="iPTMnet" id="Q8LC68"/>
<dbReference type="PaxDb" id="3702-AT1G18800.1"/>
<dbReference type="PeptideAtlas" id="Q8LC68"/>
<dbReference type="ProMEX" id="Q8LC68"/>
<dbReference type="ProteomicsDB" id="250599">
    <molecule id="Q8LC68-1"/>
</dbReference>
<dbReference type="EnsemblPlants" id="AT1G18800.1">
    <molecule id="Q8LC68-2"/>
    <property type="protein sequence ID" value="AT1G18800.1"/>
    <property type="gene ID" value="AT1G18800"/>
</dbReference>
<dbReference type="GeneID" id="838462"/>
<dbReference type="Gramene" id="AT1G18800.1">
    <molecule id="Q8LC68-2"/>
    <property type="protein sequence ID" value="AT1G18800.1"/>
    <property type="gene ID" value="AT1G18800"/>
</dbReference>
<dbReference type="KEGG" id="ath:AT1G18800"/>
<dbReference type="Araport" id="AT1G18800"/>
<dbReference type="TAIR" id="AT1G18800">
    <property type="gene designation" value="NRP2"/>
</dbReference>
<dbReference type="eggNOG" id="KOG1508">
    <property type="taxonomic scope" value="Eukaryota"/>
</dbReference>
<dbReference type="HOGENOM" id="CLU_051687_0_0_1"/>
<dbReference type="InParanoid" id="Q8LC68"/>
<dbReference type="OMA" id="WPVALMN"/>
<dbReference type="OrthoDB" id="19419at2759"/>
<dbReference type="PRO" id="PR:Q8LC68"/>
<dbReference type="Proteomes" id="UP000006548">
    <property type="component" value="Chromosome 1"/>
</dbReference>
<dbReference type="ExpressionAtlas" id="Q8LC68">
    <property type="expression patterns" value="baseline and differential"/>
</dbReference>
<dbReference type="GO" id="GO:0005737">
    <property type="term" value="C:cytoplasm"/>
    <property type="evidence" value="ECO:0000314"/>
    <property type="project" value="TAIR"/>
</dbReference>
<dbReference type="GO" id="GO:0005829">
    <property type="term" value="C:cytosol"/>
    <property type="evidence" value="ECO:0007005"/>
    <property type="project" value="TAIR"/>
</dbReference>
<dbReference type="GO" id="GO:0005634">
    <property type="term" value="C:nucleus"/>
    <property type="evidence" value="ECO:0000314"/>
    <property type="project" value="TAIR"/>
</dbReference>
<dbReference type="GO" id="GO:0003682">
    <property type="term" value="F:chromatin binding"/>
    <property type="evidence" value="ECO:0000314"/>
    <property type="project" value="TAIR"/>
</dbReference>
<dbReference type="GO" id="GO:0042393">
    <property type="term" value="F:histone binding"/>
    <property type="evidence" value="ECO:0000314"/>
    <property type="project" value="TAIR"/>
</dbReference>
<dbReference type="GO" id="GO:0000724">
    <property type="term" value="P:double-strand break repair via homologous recombination"/>
    <property type="evidence" value="ECO:0000316"/>
    <property type="project" value="TAIR"/>
</dbReference>
<dbReference type="GO" id="GO:0006334">
    <property type="term" value="P:nucleosome assembly"/>
    <property type="evidence" value="ECO:0007669"/>
    <property type="project" value="InterPro"/>
</dbReference>
<dbReference type="GO" id="GO:0016444">
    <property type="term" value="P:somatic cell DNA recombination"/>
    <property type="evidence" value="ECO:0000315"/>
    <property type="project" value="UniProtKB"/>
</dbReference>
<dbReference type="FunFam" id="3.30.1120.90:FF:000007">
    <property type="entry name" value="NAP1-related protein 1"/>
    <property type="match status" value="1"/>
</dbReference>
<dbReference type="FunFam" id="1.20.5.1500:FF:000003">
    <property type="entry name" value="SET isoform 2"/>
    <property type="match status" value="1"/>
</dbReference>
<dbReference type="Gene3D" id="1.20.5.1500">
    <property type="match status" value="1"/>
</dbReference>
<dbReference type="Gene3D" id="3.30.1120.90">
    <property type="entry name" value="Nucleosome assembly protein"/>
    <property type="match status" value="1"/>
</dbReference>
<dbReference type="InterPro" id="IPR037231">
    <property type="entry name" value="NAP-like_sf"/>
</dbReference>
<dbReference type="InterPro" id="IPR002164">
    <property type="entry name" value="NAP_family"/>
</dbReference>
<dbReference type="PANTHER" id="PTHR11875">
    <property type="entry name" value="TESTIS-SPECIFIC Y-ENCODED PROTEIN"/>
    <property type="match status" value="1"/>
</dbReference>
<dbReference type="Pfam" id="PF00956">
    <property type="entry name" value="NAP"/>
    <property type="match status" value="1"/>
</dbReference>
<dbReference type="SUPFAM" id="SSF143113">
    <property type="entry name" value="NAP-like"/>
    <property type="match status" value="1"/>
</dbReference>
<sequence length="255" mass="29354">MVTDKSKKAKTEEENVEQIDAELVLSIEKLQEIQDDLEKINEKASDEVLEVEQKYNVIRKPVYDKRNEIIKTIPDFWLTAFLSHPALGELLTEEDQKIFKYLSSLDVEDAKDVKSGYSITFSFNPNPFFEDGKLTKTFTFLEEGTTKITATPIKWKEGKGLANGVNHEKNGNKRALPEESFFTWFSDAQHKEDVEDEMQDEVADIIKEDLWPNPLTYFNNDADEEDFDGDDDGDEEEKEGDSDEDDDEEDEVGEE</sequence>
<organism>
    <name type="scientific">Arabidopsis thaliana</name>
    <name type="common">Mouse-ear cress</name>
    <dbReference type="NCBI Taxonomy" id="3702"/>
    <lineage>
        <taxon>Eukaryota</taxon>
        <taxon>Viridiplantae</taxon>
        <taxon>Streptophyta</taxon>
        <taxon>Embryophyta</taxon>
        <taxon>Tracheophyta</taxon>
        <taxon>Spermatophyta</taxon>
        <taxon>Magnoliopsida</taxon>
        <taxon>eudicotyledons</taxon>
        <taxon>Gunneridae</taxon>
        <taxon>Pentapetalae</taxon>
        <taxon>rosids</taxon>
        <taxon>malvids</taxon>
        <taxon>Brassicales</taxon>
        <taxon>Brassicaceae</taxon>
        <taxon>Camelineae</taxon>
        <taxon>Arabidopsis</taxon>
    </lineage>
</organism>
<proteinExistence type="evidence at protein level"/>
<gene>
    <name type="primary">NRP2</name>
    <name type="synonym">NFA5</name>
    <name type="ordered locus">At1g18800</name>
    <name type="ORF">F6A14.10</name>
</gene>
<keyword id="KW-0002">3D-structure</keyword>
<keyword id="KW-0025">Alternative splicing</keyword>
<keyword id="KW-0143">Chaperone</keyword>
<keyword id="KW-0175">Coiled coil</keyword>
<keyword id="KW-0963">Cytoplasm</keyword>
<keyword id="KW-0539">Nucleus</keyword>
<keyword id="KW-1185">Reference proteome</keyword>
<comment type="function">
    <text evidence="3 4 5">Acts as a histone H2A/H2B chaperone in nucleosome assembly, playing a critical role for the correct expression of genes involved in root proliferation and patterning. Required with NRP1 for the maintenance of cell proliferation and differentiation in postembryonic root growth. Involved in both intramolecular and intermolecular somatic homologous recombination.</text>
</comment>
<comment type="subunit">
    <text evidence="3 6">Can form homomeric and heteromeric protein complexes with NRP1 (PubMed:17122067, PubMed:31213016). Binds histones H2A and H2B and associates with chromatin in vivo (PubMed:17122067).</text>
</comment>
<comment type="subcellular location">
    <subcellularLocation>
        <location evidence="3">Cytoplasm</location>
    </subcellularLocation>
    <subcellularLocation>
        <location evidence="3">Nucleus</location>
    </subcellularLocation>
</comment>
<comment type="alternative products">
    <event type="alternative splicing"/>
    <isoform>
        <id>Q8LC68-1</id>
        <name>1</name>
        <sequence type="displayed"/>
    </isoform>
    <isoform>
        <id>Q8LC68-2</id>
        <name>2</name>
        <sequence type="described" ref="VSP_053258"/>
    </isoform>
</comment>
<comment type="tissue specificity">
    <text evidence="3">Ubiquitous.</text>
</comment>
<comment type="domain">
    <text>The acidic domain is probably involved in the interaction with histones.</text>
</comment>
<comment type="disruption phenotype">
    <text evidence="3 5">No visible phenotype.</text>
</comment>
<comment type="miscellaneous">
    <text evidence="11 12">Double mutant nrp1-nrp2 shows arrest of cell cycle progression at G2/M and disordered cellular organization occurred in root tips resulting in a short-root phenotype (PubMed:17122067). Double mutant nrp1-nrp2 also displays hypersensitive response to DNA damage (PubMed:17122067) and impaired somatic homologous recombination (PubMed:22534127).</text>
</comment>
<comment type="similarity">
    <text evidence="10">Belongs to the nucleosome assembly protein (NAP) family.</text>
</comment>
<comment type="sequence caution" evidence="10">
    <conflict type="frameshift">
        <sequence resource="EMBL-CDS" id="AAO63312"/>
    </conflict>
</comment>
<comment type="sequence caution" evidence="10">
    <conflict type="frameshift">
        <sequence resource="EMBL-CDS" id="BAC42657"/>
    </conflict>
</comment>
<name>NRP2_ARATH</name>